<proteinExistence type="inferred from homology"/>
<sequence>MKKWQFVGTTALGATLLLGACGGGNGGSGNSDLKGEAKGDGSSTVAPIVEKLNEKWAQDHSDAKISAGQAGTGAGFQKFIAGDIDFADASRPIKDEEKQKLQDKNIKYKEFKIAQDGVTVAVNKENDFVDELDKQQLKAIYSGKAKTWKDVNSKWPDKKINAVSPNSSHGTYDFFENEVMNKEDIKAEKNADTNAIVSSVTKNKEGIGYFGYNFYVQNKDKLKEVKIKDENGKATEPTKKTIQDNSYALSRPLFIYVNEKALKDNKVMSEFIKFVLEDKGKAAEEGGYVAAPEKTYKSQLDDLKAFIDKNQKSDDKKSDDKKSEDKK</sequence>
<comment type="function">
    <text evidence="1">Part of the ABC transporter complex PstSACB involved in phosphate import.</text>
</comment>
<comment type="subunit">
    <text evidence="4">The complex is composed of two ATP-binding proteins (PstB), two transmembrane proteins (PstC and PstA) and a solute-binding protein (PstS).</text>
</comment>
<comment type="subcellular location">
    <subcellularLocation>
        <location evidence="4">Cell membrane</location>
        <topology evidence="4">Lipid-anchor</topology>
    </subcellularLocation>
</comment>
<comment type="similarity">
    <text evidence="4">Belongs to the PstS family.</text>
</comment>
<dbReference type="EMBL" id="BX571856">
    <property type="protein sequence ID" value="CAG40399.1"/>
    <property type="molecule type" value="Genomic_DNA"/>
</dbReference>
<dbReference type="RefSeq" id="WP_000759233.1">
    <property type="nucleotide sequence ID" value="NC_002952.2"/>
</dbReference>
<dbReference type="SMR" id="Q6GH18"/>
<dbReference type="KEGG" id="sar:SAR1402"/>
<dbReference type="HOGENOM" id="CLU_026228_1_1_9"/>
<dbReference type="Proteomes" id="UP000000596">
    <property type="component" value="Chromosome"/>
</dbReference>
<dbReference type="GO" id="GO:0005886">
    <property type="term" value="C:plasma membrane"/>
    <property type="evidence" value="ECO:0007669"/>
    <property type="project" value="UniProtKB-SubCell"/>
</dbReference>
<dbReference type="GO" id="GO:0042301">
    <property type="term" value="F:phosphate ion binding"/>
    <property type="evidence" value="ECO:0007669"/>
    <property type="project" value="InterPro"/>
</dbReference>
<dbReference type="GO" id="GO:0006817">
    <property type="term" value="P:phosphate ion transport"/>
    <property type="evidence" value="ECO:0007669"/>
    <property type="project" value="UniProtKB-KW"/>
</dbReference>
<dbReference type="CDD" id="cd13654">
    <property type="entry name" value="PBP2_phosphate_like_2"/>
    <property type="match status" value="1"/>
</dbReference>
<dbReference type="Gene3D" id="3.40.190.10">
    <property type="entry name" value="Periplasmic binding protein-like II"/>
    <property type="match status" value="2"/>
</dbReference>
<dbReference type="InterPro" id="IPR024370">
    <property type="entry name" value="PBP_domain"/>
</dbReference>
<dbReference type="InterPro" id="IPR011862">
    <property type="entry name" value="Phos-bd"/>
</dbReference>
<dbReference type="InterPro" id="IPR050811">
    <property type="entry name" value="Phosphate_ABC_transporter"/>
</dbReference>
<dbReference type="NCBIfam" id="TIGR02136">
    <property type="entry name" value="ptsS_2"/>
    <property type="match status" value="1"/>
</dbReference>
<dbReference type="PANTHER" id="PTHR30570">
    <property type="entry name" value="PERIPLASMIC PHOSPHATE BINDING COMPONENT OF PHOSPHATE ABC TRANSPORTER"/>
    <property type="match status" value="1"/>
</dbReference>
<dbReference type="PANTHER" id="PTHR30570:SF1">
    <property type="entry name" value="PHOSPHATE-BINDING PROTEIN PSTS"/>
    <property type="match status" value="1"/>
</dbReference>
<dbReference type="Pfam" id="PF12849">
    <property type="entry name" value="PBP_like_2"/>
    <property type="match status" value="1"/>
</dbReference>
<dbReference type="SUPFAM" id="SSF53850">
    <property type="entry name" value="Periplasmic binding protein-like II"/>
    <property type="match status" value="1"/>
</dbReference>
<dbReference type="PROSITE" id="PS51257">
    <property type="entry name" value="PROKAR_LIPOPROTEIN"/>
    <property type="match status" value="1"/>
</dbReference>
<name>PSTS_STAAR</name>
<feature type="signal peptide" evidence="2">
    <location>
        <begin position="1"/>
        <end position="20"/>
    </location>
</feature>
<feature type="chain" id="PRO_0000281659" description="Phosphate-binding protein PstS">
    <location>
        <begin position="21"/>
        <end position="327"/>
    </location>
</feature>
<feature type="region of interest" description="Disordered" evidence="3">
    <location>
        <begin position="307"/>
        <end position="327"/>
    </location>
</feature>
<feature type="lipid moiety-binding region" description="N-palmitoyl cysteine" evidence="2">
    <location>
        <position position="21"/>
    </location>
</feature>
<feature type="lipid moiety-binding region" description="S-diacylglycerol cysteine" evidence="2">
    <location>
        <position position="21"/>
    </location>
</feature>
<reference key="1">
    <citation type="journal article" date="2004" name="Proc. Natl. Acad. Sci. U.S.A.">
        <title>Complete genomes of two clinical Staphylococcus aureus strains: evidence for the rapid evolution of virulence and drug resistance.</title>
        <authorList>
            <person name="Holden M.T.G."/>
            <person name="Feil E.J."/>
            <person name="Lindsay J.A."/>
            <person name="Peacock S.J."/>
            <person name="Day N.P.J."/>
            <person name="Enright M.C."/>
            <person name="Foster T.J."/>
            <person name="Moore C.E."/>
            <person name="Hurst L."/>
            <person name="Atkin R."/>
            <person name="Barron A."/>
            <person name="Bason N."/>
            <person name="Bentley S.D."/>
            <person name="Chillingworth C."/>
            <person name="Chillingworth T."/>
            <person name="Churcher C."/>
            <person name="Clark L."/>
            <person name="Corton C."/>
            <person name="Cronin A."/>
            <person name="Doggett J."/>
            <person name="Dowd L."/>
            <person name="Feltwell T."/>
            <person name="Hance Z."/>
            <person name="Harris B."/>
            <person name="Hauser H."/>
            <person name="Holroyd S."/>
            <person name="Jagels K."/>
            <person name="James K.D."/>
            <person name="Lennard N."/>
            <person name="Line A."/>
            <person name="Mayes R."/>
            <person name="Moule S."/>
            <person name="Mungall K."/>
            <person name="Ormond D."/>
            <person name="Quail M.A."/>
            <person name="Rabbinowitsch E."/>
            <person name="Rutherford K.M."/>
            <person name="Sanders M."/>
            <person name="Sharp S."/>
            <person name="Simmonds M."/>
            <person name="Stevens K."/>
            <person name="Whitehead S."/>
            <person name="Barrell B.G."/>
            <person name="Spratt B.G."/>
            <person name="Parkhill J."/>
        </authorList>
    </citation>
    <scope>NUCLEOTIDE SEQUENCE [LARGE SCALE GENOMIC DNA]</scope>
    <source>
        <strain>MRSA252</strain>
    </source>
</reference>
<accession>Q6GH18</accession>
<protein>
    <recommendedName>
        <fullName>Phosphate-binding protein PstS</fullName>
        <shortName>PBP</shortName>
    </recommendedName>
</protein>
<keyword id="KW-1003">Cell membrane</keyword>
<keyword id="KW-0449">Lipoprotein</keyword>
<keyword id="KW-0472">Membrane</keyword>
<keyword id="KW-0564">Palmitate</keyword>
<keyword id="KW-0592">Phosphate transport</keyword>
<keyword id="KW-0732">Signal</keyword>
<keyword id="KW-0813">Transport</keyword>
<evidence type="ECO:0000250" key="1"/>
<evidence type="ECO:0000255" key="2">
    <source>
        <dbReference type="PROSITE-ProRule" id="PRU00303"/>
    </source>
</evidence>
<evidence type="ECO:0000256" key="3">
    <source>
        <dbReference type="SAM" id="MobiDB-lite"/>
    </source>
</evidence>
<evidence type="ECO:0000305" key="4"/>
<gene>
    <name type="primary">pstS</name>
    <name type="ordered locus">SAR1402</name>
</gene>
<organism>
    <name type="scientific">Staphylococcus aureus (strain MRSA252)</name>
    <dbReference type="NCBI Taxonomy" id="282458"/>
    <lineage>
        <taxon>Bacteria</taxon>
        <taxon>Bacillati</taxon>
        <taxon>Bacillota</taxon>
        <taxon>Bacilli</taxon>
        <taxon>Bacillales</taxon>
        <taxon>Staphylococcaceae</taxon>
        <taxon>Staphylococcus</taxon>
    </lineage>
</organism>